<feature type="chain" id="PRO_0000257637" description="Dual-action ribosomal maturation protein DarP">
    <location>
        <begin position="1"/>
        <end position="202"/>
    </location>
</feature>
<feature type="region of interest" description="Disordered" evidence="2">
    <location>
        <begin position="1"/>
        <end position="39"/>
    </location>
</feature>
<feature type="compositionally biased region" description="Low complexity" evidence="2">
    <location>
        <begin position="1"/>
        <end position="13"/>
    </location>
</feature>
<reference key="1">
    <citation type="journal article" date="2010" name="PLoS ONE">
        <title>The complete genome sequence of Cupriavidus metallidurans strain CH34, a master survivalist in harsh and anthropogenic environments.</title>
        <authorList>
            <person name="Janssen P.J."/>
            <person name="Van Houdt R."/>
            <person name="Moors H."/>
            <person name="Monsieurs P."/>
            <person name="Morin N."/>
            <person name="Michaux A."/>
            <person name="Benotmane M.A."/>
            <person name="Leys N."/>
            <person name="Vallaeys T."/>
            <person name="Lapidus A."/>
            <person name="Monchy S."/>
            <person name="Medigue C."/>
            <person name="Taghavi S."/>
            <person name="McCorkle S."/>
            <person name="Dunn J."/>
            <person name="van der Lelie D."/>
            <person name="Mergeay M."/>
        </authorList>
    </citation>
    <scope>NUCLEOTIDE SEQUENCE [LARGE SCALE GENOMIC DNA]</scope>
    <source>
        <strain>ATCC 43123 / DSM 2839 / NBRC 102507 / CH34</strain>
    </source>
</reference>
<evidence type="ECO:0000255" key="1">
    <source>
        <dbReference type="HAMAP-Rule" id="MF_00765"/>
    </source>
</evidence>
<evidence type="ECO:0000256" key="2">
    <source>
        <dbReference type="SAM" id="MobiDB-lite"/>
    </source>
</evidence>
<gene>
    <name evidence="1" type="primary">darP</name>
    <name type="ordered locus">Rmet_2571</name>
</gene>
<comment type="function">
    <text evidence="1">Member of a network of 50S ribosomal subunit biogenesis factors which assembles along the 30S-50S interface, preventing incorrect 23S rRNA structures from forming. Promotes peptidyl transferase center (PTC) maturation.</text>
</comment>
<comment type="subcellular location">
    <subcellularLocation>
        <location evidence="1">Cytoplasm</location>
    </subcellularLocation>
    <text evidence="1">Associates with late stage pre-50S ribosomal subunits.</text>
</comment>
<comment type="similarity">
    <text evidence="1">Belongs to the DarP family.</text>
</comment>
<proteinExistence type="inferred from homology"/>
<dbReference type="EMBL" id="CP000352">
    <property type="protein sequence ID" value="ABF09448.1"/>
    <property type="molecule type" value="Genomic_DNA"/>
</dbReference>
<dbReference type="SMR" id="Q1LK78"/>
<dbReference type="STRING" id="266264.Rmet_2571"/>
<dbReference type="KEGG" id="rme:Rmet_2571"/>
<dbReference type="eggNOG" id="COG3028">
    <property type="taxonomic scope" value="Bacteria"/>
</dbReference>
<dbReference type="HOGENOM" id="CLU_106757_1_0_4"/>
<dbReference type="Proteomes" id="UP000002429">
    <property type="component" value="Chromosome"/>
</dbReference>
<dbReference type="GO" id="GO:0005829">
    <property type="term" value="C:cytosol"/>
    <property type="evidence" value="ECO:0007669"/>
    <property type="project" value="TreeGrafter"/>
</dbReference>
<dbReference type="GO" id="GO:0043022">
    <property type="term" value="F:ribosome binding"/>
    <property type="evidence" value="ECO:0007669"/>
    <property type="project" value="UniProtKB-UniRule"/>
</dbReference>
<dbReference type="GO" id="GO:0019843">
    <property type="term" value="F:rRNA binding"/>
    <property type="evidence" value="ECO:0007669"/>
    <property type="project" value="UniProtKB-UniRule"/>
</dbReference>
<dbReference type="GO" id="GO:1902626">
    <property type="term" value="P:assembly of large subunit precursor of preribosome"/>
    <property type="evidence" value="ECO:0007669"/>
    <property type="project" value="UniProtKB-UniRule"/>
</dbReference>
<dbReference type="CDD" id="cd16331">
    <property type="entry name" value="YjgA-like"/>
    <property type="match status" value="1"/>
</dbReference>
<dbReference type="Gene3D" id="1.10.60.30">
    <property type="entry name" value="PSPTO4464-like domains"/>
    <property type="match status" value="1"/>
</dbReference>
<dbReference type="HAMAP" id="MF_00765">
    <property type="entry name" value="DarP"/>
    <property type="match status" value="1"/>
</dbReference>
<dbReference type="InterPro" id="IPR006839">
    <property type="entry name" value="DarP"/>
</dbReference>
<dbReference type="InterPro" id="IPR023153">
    <property type="entry name" value="DarP_sf"/>
</dbReference>
<dbReference type="NCBIfam" id="NF003593">
    <property type="entry name" value="PRK05255.1-1"/>
    <property type="match status" value="1"/>
</dbReference>
<dbReference type="PANTHER" id="PTHR38101">
    <property type="entry name" value="UPF0307 PROTEIN YJGA"/>
    <property type="match status" value="1"/>
</dbReference>
<dbReference type="PANTHER" id="PTHR38101:SF1">
    <property type="entry name" value="UPF0307 PROTEIN YJGA"/>
    <property type="match status" value="1"/>
</dbReference>
<dbReference type="Pfam" id="PF04751">
    <property type="entry name" value="DarP"/>
    <property type="match status" value="1"/>
</dbReference>
<dbReference type="PIRSF" id="PIRSF016183">
    <property type="entry name" value="UCP016183"/>
    <property type="match status" value="1"/>
</dbReference>
<dbReference type="SUPFAM" id="SSF158710">
    <property type="entry name" value="PSPTO4464-like"/>
    <property type="match status" value="1"/>
</dbReference>
<accession>Q1LK78</accession>
<organism>
    <name type="scientific">Cupriavidus metallidurans (strain ATCC 43123 / DSM 2839 / NBRC 102507 / CH34)</name>
    <name type="common">Ralstonia metallidurans</name>
    <dbReference type="NCBI Taxonomy" id="266264"/>
    <lineage>
        <taxon>Bacteria</taxon>
        <taxon>Pseudomonadati</taxon>
        <taxon>Pseudomonadota</taxon>
        <taxon>Betaproteobacteria</taxon>
        <taxon>Burkholderiales</taxon>
        <taxon>Burkholderiaceae</taxon>
        <taxon>Cupriavidus</taxon>
    </lineage>
</organism>
<protein>
    <recommendedName>
        <fullName evidence="1">Dual-action ribosomal maturation protein DarP</fullName>
    </recommendedName>
    <alternativeName>
        <fullName evidence="1">Large ribosomal subunit assembly factor DarP</fullName>
    </alternativeName>
</protein>
<name>DARP_CUPMC</name>
<sequence>MPPMTRNTRNNPNGRFPGAFAPEDEDDLPKSKSQRKRDMTALQDIGAELESLPKDRLARVPMPEALADAIHAARKITSHEGKRRQMQFVGKVMRGLDDDEIATIRAALEGFKGTSKAETARMHLIERWRELLLADDDALTKFLGEHPSVDVQSVRNIIRNARKEKELAKPPKYFRELFQAIKTALEAKDADAAPDNAPEPEA</sequence>
<keyword id="KW-0963">Cytoplasm</keyword>
<keyword id="KW-1185">Reference proteome</keyword>
<keyword id="KW-0690">Ribosome biogenesis</keyword>
<keyword id="KW-0694">RNA-binding</keyword>
<keyword id="KW-0699">rRNA-binding</keyword>